<protein>
    <recommendedName>
        <fullName evidence="1">Ribosome maturation factor RimP</fullName>
    </recommendedName>
</protein>
<sequence>MGASPIFYLHSMHEGVQVSSKLEQLQALLAPVVEGLGYQCWGIEYVSQGKHSVLRIYIDKEGGILVEDCEAVSRQASAILDVEDPISSEYTLEVSSPGMDRPLFTLEQFASHAGEQVKIKLRTPFEGRRNFQGLLRGVEEQDVVVQVDSHEFLLPIDSIDKANIIPSFD</sequence>
<evidence type="ECO:0000255" key="1">
    <source>
        <dbReference type="HAMAP-Rule" id="MF_01077"/>
    </source>
</evidence>
<keyword id="KW-0963">Cytoplasm</keyword>
<keyword id="KW-0690">Ribosome biogenesis</keyword>
<gene>
    <name evidence="1" type="primary">rimP</name>
    <name type="ordered locus">PputW619_0719</name>
</gene>
<organism>
    <name type="scientific">Pseudomonas putida (strain W619)</name>
    <dbReference type="NCBI Taxonomy" id="390235"/>
    <lineage>
        <taxon>Bacteria</taxon>
        <taxon>Pseudomonadati</taxon>
        <taxon>Pseudomonadota</taxon>
        <taxon>Gammaproteobacteria</taxon>
        <taxon>Pseudomonadales</taxon>
        <taxon>Pseudomonadaceae</taxon>
        <taxon>Pseudomonas</taxon>
    </lineage>
</organism>
<proteinExistence type="inferred from homology"/>
<comment type="function">
    <text evidence="1">Required for maturation of 30S ribosomal subunits.</text>
</comment>
<comment type="subcellular location">
    <subcellularLocation>
        <location evidence="1">Cytoplasm</location>
    </subcellularLocation>
</comment>
<comment type="similarity">
    <text evidence="1">Belongs to the RimP family.</text>
</comment>
<accession>B1J268</accession>
<name>RIMP_PSEPW</name>
<feature type="chain" id="PRO_0000384740" description="Ribosome maturation factor RimP">
    <location>
        <begin position="1"/>
        <end position="169"/>
    </location>
</feature>
<dbReference type="EMBL" id="CP000949">
    <property type="protein sequence ID" value="ACA71224.1"/>
    <property type="molecule type" value="Genomic_DNA"/>
</dbReference>
<dbReference type="SMR" id="B1J268"/>
<dbReference type="STRING" id="390235.PputW619_0719"/>
<dbReference type="KEGG" id="ppw:PputW619_0719"/>
<dbReference type="eggNOG" id="COG0779">
    <property type="taxonomic scope" value="Bacteria"/>
</dbReference>
<dbReference type="HOGENOM" id="CLU_070525_1_1_6"/>
<dbReference type="GO" id="GO:0005829">
    <property type="term" value="C:cytosol"/>
    <property type="evidence" value="ECO:0007669"/>
    <property type="project" value="TreeGrafter"/>
</dbReference>
<dbReference type="GO" id="GO:0000028">
    <property type="term" value="P:ribosomal small subunit assembly"/>
    <property type="evidence" value="ECO:0007669"/>
    <property type="project" value="TreeGrafter"/>
</dbReference>
<dbReference type="GO" id="GO:0006412">
    <property type="term" value="P:translation"/>
    <property type="evidence" value="ECO:0007669"/>
    <property type="project" value="TreeGrafter"/>
</dbReference>
<dbReference type="CDD" id="cd01734">
    <property type="entry name" value="YlxS_C"/>
    <property type="match status" value="1"/>
</dbReference>
<dbReference type="FunFam" id="3.30.300.70:FF:000001">
    <property type="entry name" value="Ribosome maturation factor RimP"/>
    <property type="match status" value="1"/>
</dbReference>
<dbReference type="Gene3D" id="2.30.30.180">
    <property type="entry name" value="Ribosome maturation factor RimP, C-terminal domain"/>
    <property type="match status" value="1"/>
</dbReference>
<dbReference type="Gene3D" id="3.30.300.70">
    <property type="entry name" value="RimP-like superfamily, N-terminal"/>
    <property type="match status" value="1"/>
</dbReference>
<dbReference type="HAMAP" id="MF_01077">
    <property type="entry name" value="RimP"/>
    <property type="match status" value="1"/>
</dbReference>
<dbReference type="InterPro" id="IPR003728">
    <property type="entry name" value="Ribosome_maturation_RimP"/>
</dbReference>
<dbReference type="InterPro" id="IPR028998">
    <property type="entry name" value="RimP_C"/>
</dbReference>
<dbReference type="InterPro" id="IPR036847">
    <property type="entry name" value="RimP_C_sf"/>
</dbReference>
<dbReference type="InterPro" id="IPR028989">
    <property type="entry name" value="RimP_N"/>
</dbReference>
<dbReference type="InterPro" id="IPR035956">
    <property type="entry name" value="RimP_N_sf"/>
</dbReference>
<dbReference type="NCBIfam" id="NF000927">
    <property type="entry name" value="PRK00092.1-1"/>
    <property type="match status" value="1"/>
</dbReference>
<dbReference type="PANTHER" id="PTHR33867">
    <property type="entry name" value="RIBOSOME MATURATION FACTOR RIMP"/>
    <property type="match status" value="1"/>
</dbReference>
<dbReference type="PANTHER" id="PTHR33867:SF1">
    <property type="entry name" value="RIBOSOME MATURATION FACTOR RIMP"/>
    <property type="match status" value="1"/>
</dbReference>
<dbReference type="Pfam" id="PF17384">
    <property type="entry name" value="DUF150_C"/>
    <property type="match status" value="1"/>
</dbReference>
<dbReference type="Pfam" id="PF02576">
    <property type="entry name" value="RimP_N"/>
    <property type="match status" value="1"/>
</dbReference>
<dbReference type="SUPFAM" id="SSF74942">
    <property type="entry name" value="YhbC-like, C-terminal domain"/>
    <property type="match status" value="1"/>
</dbReference>
<dbReference type="SUPFAM" id="SSF75420">
    <property type="entry name" value="YhbC-like, N-terminal domain"/>
    <property type="match status" value="1"/>
</dbReference>
<reference key="1">
    <citation type="submission" date="2008-02" db="EMBL/GenBank/DDBJ databases">
        <title>Complete sequence of Pseudomonas putida W619.</title>
        <authorList>
            <person name="Copeland A."/>
            <person name="Lucas S."/>
            <person name="Lapidus A."/>
            <person name="Barry K."/>
            <person name="Detter J.C."/>
            <person name="Glavina del Rio T."/>
            <person name="Dalin E."/>
            <person name="Tice H."/>
            <person name="Pitluck S."/>
            <person name="Chain P."/>
            <person name="Malfatti S."/>
            <person name="Shin M."/>
            <person name="Vergez L."/>
            <person name="Schmutz J."/>
            <person name="Larimer F."/>
            <person name="Land M."/>
            <person name="Hauser L."/>
            <person name="Kyrpides N."/>
            <person name="Kim E."/>
            <person name="Taghavi S."/>
            <person name="Vangronsveld D."/>
            <person name="van der Lelie D."/>
            <person name="Richardson P."/>
        </authorList>
    </citation>
    <scope>NUCLEOTIDE SEQUENCE [LARGE SCALE GENOMIC DNA]</scope>
    <source>
        <strain>W619</strain>
    </source>
</reference>